<comment type="function">
    <text evidence="4 6 8 10 11 12 13 15">ATP-dependent serine protease that mediates the selective degradation of mutant and abnormal proteins as well as certain short-lived regulatory proteins, including some antitoxins. Required for cellular homeostasis and for survival from DNA damage and developmental changes induced by stress. Degrades polypeptides processively to yield small peptide fragments that are 5 to 10 amino acids long. Binds to DNA in a double-stranded, site-specific manner. Endogenous substrates include the regulatory proteins RcsA and SulA, the transcriptional activator SoxS, UmuD and at least type II antitoxins CcdA, HipB and MazE (PubMed:16460757, PubMed:22720069, PubMed:24375411, PubMed:8022284). Its overproduction specifically inhibits translation through at least two different pathways, one of them being the YoeB-YefM toxin-antitoxin system (PubMed:15009896).</text>
</comment>
<comment type="catalytic activity">
    <reaction evidence="1">
        <text>Hydrolysis of proteins in presence of ATP.</text>
        <dbReference type="EC" id="3.4.21.53"/>
    </reaction>
</comment>
<comment type="activity regulation">
    <text>Contains an allosteric site (distinct from its active site), whose occupancy by an unfolded polypeptide leads to enzyme activation.</text>
</comment>
<comment type="biophysicochemical properties">
    <kinetics>
        <KM evidence="7">0.201 mM for ATP for ATPase activity</KM>
    </kinetics>
</comment>
<comment type="subunit">
    <text evidence="1 9">Homohexamer. Organized in a ring with a central cavity. ATP binding and hydrolysis do not affect the oligomeric state of the enzyme.</text>
</comment>
<comment type="interaction">
    <interactant intactId="EBI-547203">
        <id>P0A9M0</id>
    </interactant>
    <interactant intactId="EBI-546437">
        <id>P0A7R1</id>
        <label>rplI</label>
    </interactant>
    <organismsDiffer>false</organismsDiffer>
    <experiments>4</experiments>
</comment>
<comment type="interaction">
    <interactant intactId="EBI-547203">
        <id>P0A9M0</id>
    </interactant>
    <interactant intactId="EBI-557008">
        <id>P33225</id>
        <label>torA</label>
    </interactant>
    <organismsDiffer>false</organismsDiffer>
    <experiments>2</experiments>
</comment>
<comment type="subcellular location">
    <subcellularLocation>
        <location>Cytoplasm</location>
    </subcellularLocation>
</comment>
<comment type="induction">
    <text>By accumulation of abnormal proteins, such as at high temperatures. Under stress conditions.</text>
</comment>
<comment type="disruption phenotype">
    <text evidence="11 13">When both lon and ycgE are disrupted levels of OmpF decrease, leading to lower drug susceptibility, with a greater effect at 26 degrees than at 37 degrees Celsius. The mechanism is not yet understood (PubMed:19721064). Decreased persister cell formation upon antibiotic challenge due probably due to increased levels of MazF toxin (PubMed:24375411).</text>
</comment>
<comment type="miscellaneous">
    <text>Both its proteolytic and protein-activated ATPase activities are stimulated by DNA, especially single-stranded DNA.</text>
</comment>
<comment type="miscellaneous">
    <text>Both high- and low-affinity ATPase sites are present in the homooligomer. Optimal peptidase activity requires ATP binding and hydrolysis at both sites, but ATP hydrolysis is not stoichiometrically linked to peptide hydrolysis.</text>
</comment>
<comment type="similarity">
    <text evidence="1">Belongs to the peptidase S16 family.</text>
</comment>
<comment type="sequence caution" evidence="19">
    <conflict type="frameshift">
        <sequence resource="EMBL-CDS" id="AAA23537"/>
    </conflict>
</comment>
<comment type="sequence caution" evidence="19">
    <conflict type="erroneous initiation">
        <sequence resource="EMBL-CDS" id="AAB40195"/>
    </conflict>
    <text>Extended N-terminus.</text>
</comment>
<keyword id="KW-0002">3D-structure</keyword>
<keyword id="KW-0067">ATP-binding</keyword>
<keyword id="KW-0963">Cytoplasm</keyword>
<keyword id="KW-0903">Direct protein sequencing</keyword>
<keyword id="KW-0378">Hydrolase</keyword>
<keyword id="KW-0547">Nucleotide-binding</keyword>
<keyword id="KW-0645">Protease</keyword>
<keyword id="KW-1185">Reference proteome</keyword>
<keyword id="KW-0720">Serine protease</keyword>
<keyword id="KW-0346">Stress response</keyword>
<evidence type="ECO:0000255" key="1">
    <source>
        <dbReference type="HAMAP-Rule" id="MF_01973"/>
    </source>
</evidence>
<evidence type="ECO:0000255" key="2">
    <source>
        <dbReference type="PROSITE-ProRule" id="PRU01122"/>
    </source>
</evidence>
<evidence type="ECO:0000255" key="3">
    <source>
        <dbReference type="PROSITE-ProRule" id="PRU01123"/>
    </source>
</evidence>
<evidence type="ECO:0000269" key="4">
    <source>
    </source>
</evidence>
<evidence type="ECO:0000269" key="5">
    <source>
    </source>
</evidence>
<evidence type="ECO:0000269" key="6">
    <source>
    </source>
</evidence>
<evidence type="ECO:0000269" key="7">
    <source>
    </source>
</evidence>
<evidence type="ECO:0000269" key="8">
    <source>
    </source>
</evidence>
<evidence type="ECO:0000269" key="9">
    <source>
    </source>
</evidence>
<evidence type="ECO:0000269" key="10">
    <source>
    </source>
</evidence>
<evidence type="ECO:0000269" key="11">
    <source>
    </source>
</evidence>
<evidence type="ECO:0000269" key="12">
    <source>
    </source>
</evidence>
<evidence type="ECO:0000269" key="13">
    <source>
    </source>
</evidence>
<evidence type="ECO:0000269" key="14">
    <source>
    </source>
</evidence>
<evidence type="ECO:0000269" key="15">
    <source>
    </source>
</evidence>
<evidence type="ECO:0000269" key="16">
    <source>
    </source>
</evidence>
<evidence type="ECO:0000269" key="17">
    <source>
    </source>
</evidence>
<evidence type="ECO:0000269" key="18">
    <source>
    </source>
</evidence>
<evidence type="ECO:0000305" key="19"/>
<evidence type="ECO:0007829" key="20">
    <source>
        <dbReference type="PDB" id="1QZM"/>
    </source>
</evidence>
<evidence type="ECO:0007829" key="21">
    <source>
        <dbReference type="PDB" id="1RRE"/>
    </source>
</evidence>
<evidence type="ECO:0007829" key="22">
    <source>
        <dbReference type="PDB" id="2ANE"/>
    </source>
</evidence>
<evidence type="ECO:0007829" key="23">
    <source>
        <dbReference type="PDB" id="3LJC"/>
    </source>
</evidence>
<evidence type="ECO:0007829" key="24">
    <source>
        <dbReference type="PDB" id="6N2I"/>
    </source>
</evidence>
<evidence type="ECO:0007829" key="25">
    <source>
        <dbReference type="PDB" id="6U5Z"/>
    </source>
</evidence>
<sequence length="784" mass="87438">MNPERSERIEIPVLPLRDVVVYPHMVIPLFVGREKSIRCLEAAMDHDKKIMLVAQKEASTDEPGVNDLFTVGTVASILQMLKLPDGTVKVLVEGLQRARISALSDNGEHFSAKAEYLESPTIDEREQEVLVRTAISQFEGYIKLNKKIPPEVLTSLNSIDDPARLADTIAAHMPLKLADKQSVLEMSDVNERLEYLMAMMESEIDLLQVEKRIRNRVKKQMEKSQREYYLNEQMKAIQKELGEMDDAPDENEALKRKIDAAKMPKEAKEKAEAELQKLKMMSPMSAEATVVRGYIDWMVQVPWNARSKVKKDLRQAQEILDTDHYGLERVKDRILEYLAVQSRVNKIKGPILCLVGPPGVGKTSLGQSIAKATGRKYVRMALGGVRDEAEIRGHRRTYIGSMPGKLIQKMAKVGVKNPLFLLDEIDKMSSDMRGDPASALLEVLDPEQNVAFSDHYLEVDYDLSDVMFVATSNSMNIPAPLLDRMEVIRLSGYTEDEKLNIAKRHLLPKQIERNALKKGELTVDDSAIIGIIRYYTREAGVRGLEREISKLCRKAVKQLLLDKSLKHIEINGDNLHDYLGVQRFDYGRADNENRVGQVTGLAWTEVGGDLLTIETACVPGKGKLTYTGSLGEVMQESIQAALTVVRARAEKLGINPDFYEKRDIHVHVPEGATPKDGPSAGIAMCTALVSCLTGNPVRADVAMTGEITLRGQVLPIGGLKEKLLAAHRGGIKTVLIPFENKRDLEEIPDNVIADLDIHPVKRIEEVLTLALQNEPSGMQVVTAK</sequence>
<name>LON_ECOLI</name>
<proteinExistence type="evidence at protein level"/>
<gene>
    <name evidence="1" type="primary">lon</name>
    <name type="synonym">capR</name>
    <name type="synonym">deg</name>
    <name type="synonym">lopA</name>
    <name type="synonym">muc</name>
    <name type="ordered locus">b0439</name>
    <name type="ordered locus">JW0429</name>
</gene>
<protein>
    <recommendedName>
        <fullName evidence="1">Lon protease</fullName>
        <ecNumber evidence="1">3.4.21.53</ecNumber>
    </recommendedName>
    <alternativeName>
        <fullName evidence="1">ATP-dependent protease La</fullName>
    </alternativeName>
</protein>
<organism>
    <name type="scientific">Escherichia coli (strain K12)</name>
    <dbReference type="NCBI Taxonomy" id="83333"/>
    <lineage>
        <taxon>Bacteria</taxon>
        <taxon>Pseudomonadati</taxon>
        <taxon>Pseudomonadota</taxon>
        <taxon>Gammaproteobacteria</taxon>
        <taxon>Enterobacterales</taxon>
        <taxon>Enterobacteriaceae</taxon>
        <taxon>Escherichia</taxon>
    </lineage>
</organism>
<dbReference type="EC" id="3.4.21.53" evidence="1"/>
<dbReference type="EMBL" id="L12349">
    <property type="protein sequence ID" value="AAC36871.1"/>
    <property type="molecule type" value="Unassigned_DNA"/>
</dbReference>
<dbReference type="EMBL" id="M38347">
    <property type="protein sequence ID" value="AAA24079.1"/>
    <property type="molecule type" value="Genomic_DNA"/>
</dbReference>
<dbReference type="EMBL" id="L20572">
    <property type="protein sequence ID" value="AAA16837.1"/>
    <property type="molecule type" value="Unassigned_DNA"/>
</dbReference>
<dbReference type="EMBL" id="J03896">
    <property type="protein sequence ID" value="AAA24078.1"/>
    <property type="molecule type" value="Genomic_DNA"/>
</dbReference>
<dbReference type="EMBL" id="U82664">
    <property type="protein sequence ID" value="AAB40195.1"/>
    <property type="status" value="ALT_INIT"/>
    <property type="molecule type" value="Genomic_DNA"/>
</dbReference>
<dbReference type="EMBL" id="U00096">
    <property type="protein sequence ID" value="AAC73542.1"/>
    <property type="molecule type" value="Genomic_DNA"/>
</dbReference>
<dbReference type="EMBL" id="AP009048">
    <property type="protein sequence ID" value="BAE76219.1"/>
    <property type="molecule type" value="Genomic_DNA"/>
</dbReference>
<dbReference type="EMBL" id="M10153">
    <property type="protein sequence ID" value="AAA23537.1"/>
    <property type="status" value="ALT_FRAME"/>
    <property type="molecule type" value="Genomic_DNA"/>
</dbReference>
<dbReference type="PIR" id="A23101">
    <property type="entry name" value="A23101"/>
</dbReference>
<dbReference type="PIR" id="G64773">
    <property type="entry name" value="SUECLA"/>
</dbReference>
<dbReference type="RefSeq" id="NP_414973.1">
    <property type="nucleotide sequence ID" value="NC_000913.3"/>
</dbReference>
<dbReference type="RefSeq" id="WP_001295325.1">
    <property type="nucleotide sequence ID" value="NZ_STEB01000007.1"/>
</dbReference>
<dbReference type="PDB" id="1QZM">
    <property type="method" value="X-ray"/>
    <property type="resolution" value="1.90 A"/>
    <property type="chains" value="A=491-584"/>
</dbReference>
<dbReference type="PDB" id="1RR9">
    <property type="method" value="X-ray"/>
    <property type="resolution" value="2.10 A"/>
    <property type="chains" value="A/B/C/D/E/F=585-784"/>
</dbReference>
<dbReference type="PDB" id="1RRE">
    <property type="method" value="X-ray"/>
    <property type="resolution" value="1.75 A"/>
    <property type="chains" value="A/B/C/D/E/F=585-784"/>
</dbReference>
<dbReference type="PDB" id="2ANE">
    <property type="method" value="X-ray"/>
    <property type="resolution" value="2.03 A"/>
    <property type="chains" value="A/B/C/D/E/F/G/H=1-118"/>
</dbReference>
<dbReference type="PDB" id="3LJC">
    <property type="method" value="X-ray"/>
    <property type="resolution" value="2.60 A"/>
    <property type="chains" value="A=1-245"/>
</dbReference>
<dbReference type="PDB" id="6N2I">
    <property type="method" value="X-ray"/>
    <property type="resolution" value="3.50 A"/>
    <property type="chains" value="A=241-584"/>
</dbReference>
<dbReference type="PDB" id="6U5Z">
    <property type="method" value="EM"/>
    <property type="resolution" value="3.50 A"/>
    <property type="chains" value="A/B/C/D/E/F=1-784"/>
</dbReference>
<dbReference type="PDBsum" id="1QZM"/>
<dbReference type="PDBsum" id="1RR9"/>
<dbReference type="PDBsum" id="1RRE"/>
<dbReference type="PDBsum" id="2ANE"/>
<dbReference type="PDBsum" id="3LJC"/>
<dbReference type="PDBsum" id="6N2I"/>
<dbReference type="PDBsum" id="6U5Z"/>
<dbReference type="BMRB" id="P0A9M0"/>
<dbReference type="SMR" id="P0A9M0"/>
<dbReference type="BioGRID" id="4260734">
    <property type="interactions" value="241"/>
</dbReference>
<dbReference type="BioGRID" id="849474">
    <property type="interactions" value="1"/>
</dbReference>
<dbReference type="DIP" id="DIP-35845N"/>
<dbReference type="FunCoup" id="P0A9M0">
    <property type="interactions" value="952"/>
</dbReference>
<dbReference type="IntAct" id="P0A9M0">
    <property type="interactions" value="72"/>
</dbReference>
<dbReference type="MINT" id="P0A9M0"/>
<dbReference type="STRING" id="511145.b0439"/>
<dbReference type="MEROPS" id="S16.001"/>
<dbReference type="jPOST" id="P0A9M0"/>
<dbReference type="PaxDb" id="511145-b0439"/>
<dbReference type="EnsemblBacteria" id="AAC73542">
    <property type="protein sequence ID" value="AAC73542"/>
    <property type="gene ID" value="b0439"/>
</dbReference>
<dbReference type="GeneID" id="93777015"/>
<dbReference type="GeneID" id="945085"/>
<dbReference type="KEGG" id="ecj:JW0429"/>
<dbReference type="KEGG" id="eco:b0439"/>
<dbReference type="KEGG" id="ecoc:C3026_02150"/>
<dbReference type="PATRIC" id="fig|1411691.4.peg.1837"/>
<dbReference type="EchoBASE" id="EB0537"/>
<dbReference type="eggNOG" id="COG0466">
    <property type="taxonomic scope" value="Bacteria"/>
</dbReference>
<dbReference type="HOGENOM" id="CLU_004109_4_3_6"/>
<dbReference type="InParanoid" id="P0A9M0"/>
<dbReference type="OMA" id="EYFLHQQ"/>
<dbReference type="OrthoDB" id="9803599at2"/>
<dbReference type="PhylomeDB" id="P0A9M0"/>
<dbReference type="BioCyc" id="EcoCyc:EG10542-MONOMER"/>
<dbReference type="BioCyc" id="MetaCyc:EG10542-MONOMER"/>
<dbReference type="BRENDA" id="3.4.21.53">
    <property type="organism ID" value="2026"/>
</dbReference>
<dbReference type="BRENDA" id="3.6.4.7">
    <property type="organism ID" value="2026"/>
</dbReference>
<dbReference type="SABIO-RK" id="P0A9M0"/>
<dbReference type="EvolutionaryTrace" id="P0A9M0"/>
<dbReference type="PRO" id="PR:P0A9M0"/>
<dbReference type="Proteomes" id="UP000000625">
    <property type="component" value="Chromosome"/>
</dbReference>
<dbReference type="GO" id="GO:0005737">
    <property type="term" value="C:cytoplasm"/>
    <property type="evidence" value="ECO:0000314"/>
    <property type="project" value="EcoliWiki"/>
</dbReference>
<dbReference type="GO" id="GO:0005829">
    <property type="term" value="C:cytosol"/>
    <property type="evidence" value="ECO:0000314"/>
    <property type="project" value="EcoCyc"/>
</dbReference>
<dbReference type="GO" id="GO:0005524">
    <property type="term" value="F:ATP binding"/>
    <property type="evidence" value="ECO:0000314"/>
    <property type="project" value="EcoCyc"/>
</dbReference>
<dbReference type="GO" id="GO:0016887">
    <property type="term" value="F:ATP hydrolysis activity"/>
    <property type="evidence" value="ECO:0000314"/>
    <property type="project" value="EcoliWiki"/>
</dbReference>
<dbReference type="GO" id="GO:0004176">
    <property type="term" value="F:ATP-dependent peptidase activity"/>
    <property type="evidence" value="ECO:0000314"/>
    <property type="project" value="EcoliWiki"/>
</dbReference>
<dbReference type="GO" id="GO:0003677">
    <property type="term" value="F:DNA binding"/>
    <property type="evidence" value="ECO:0000314"/>
    <property type="project" value="EcoliWiki"/>
</dbReference>
<dbReference type="GO" id="GO:0008233">
    <property type="term" value="F:peptidase activity"/>
    <property type="evidence" value="ECO:0000314"/>
    <property type="project" value="EcoliWiki"/>
</dbReference>
<dbReference type="GO" id="GO:0043565">
    <property type="term" value="F:sequence-specific DNA binding"/>
    <property type="evidence" value="ECO:0007669"/>
    <property type="project" value="UniProtKB-UniRule"/>
</dbReference>
<dbReference type="GO" id="GO:0004252">
    <property type="term" value="F:serine-type endopeptidase activity"/>
    <property type="evidence" value="ECO:0000315"/>
    <property type="project" value="EcoliWiki"/>
</dbReference>
<dbReference type="GO" id="GO:0034605">
    <property type="term" value="P:cellular response to heat"/>
    <property type="evidence" value="ECO:0007669"/>
    <property type="project" value="UniProtKB-UniRule"/>
</dbReference>
<dbReference type="GO" id="GO:0006515">
    <property type="term" value="P:protein quality control for misfolded or incompletely synthesized proteins"/>
    <property type="evidence" value="ECO:0000315"/>
    <property type="project" value="EcoCyc"/>
</dbReference>
<dbReference type="GO" id="GO:0006508">
    <property type="term" value="P:proteolysis"/>
    <property type="evidence" value="ECO:0000314"/>
    <property type="project" value="EcoCyc"/>
</dbReference>
<dbReference type="GO" id="GO:0009408">
    <property type="term" value="P:response to heat"/>
    <property type="evidence" value="ECO:0000270"/>
    <property type="project" value="EcoliWiki"/>
</dbReference>
<dbReference type="GO" id="GO:0010165">
    <property type="term" value="P:response to X-ray"/>
    <property type="evidence" value="ECO:0000315"/>
    <property type="project" value="EcoCyc"/>
</dbReference>
<dbReference type="CDD" id="cd19500">
    <property type="entry name" value="RecA-like_Lon"/>
    <property type="match status" value="1"/>
</dbReference>
<dbReference type="FunFam" id="1.10.8.60:FF:000035">
    <property type="entry name" value="Lon protease"/>
    <property type="match status" value="1"/>
</dbReference>
<dbReference type="FunFam" id="1.20.58.1480:FF:000001">
    <property type="entry name" value="Lon protease"/>
    <property type="match status" value="1"/>
</dbReference>
<dbReference type="FunFam" id="2.30.130.40:FF:000001">
    <property type="entry name" value="Lon protease"/>
    <property type="match status" value="1"/>
</dbReference>
<dbReference type="FunFam" id="3.30.230.10:FF:000010">
    <property type="entry name" value="Lon protease"/>
    <property type="match status" value="1"/>
</dbReference>
<dbReference type="FunFam" id="1.20.5.5270:FF:000002">
    <property type="entry name" value="Lon protease homolog"/>
    <property type="match status" value="1"/>
</dbReference>
<dbReference type="FunFam" id="3.40.50.300:FF:000021">
    <property type="entry name" value="Lon protease homolog"/>
    <property type="match status" value="1"/>
</dbReference>
<dbReference type="Gene3D" id="1.10.8.60">
    <property type="match status" value="1"/>
</dbReference>
<dbReference type="Gene3D" id="1.20.5.5270">
    <property type="match status" value="1"/>
</dbReference>
<dbReference type="Gene3D" id="1.20.58.1480">
    <property type="match status" value="1"/>
</dbReference>
<dbReference type="Gene3D" id="3.30.230.10">
    <property type="match status" value="1"/>
</dbReference>
<dbReference type="Gene3D" id="2.30.130.40">
    <property type="entry name" value="LON domain-like"/>
    <property type="match status" value="1"/>
</dbReference>
<dbReference type="Gene3D" id="3.40.50.300">
    <property type="entry name" value="P-loop containing nucleotide triphosphate hydrolases"/>
    <property type="match status" value="1"/>
</dbReference>
<dbReference type="HAMAP" id="MF_01973">
    <property type="entry name" value="lon_bact"/>
    <property type="match status" value="1"/>
</dbReference>
<dbReference type="InterPro" id="IPR003593">
    <property type="entry name" value="AAA+_ATPase"/>
</dbReference>
<dbReference type="InterPro" id="IPR003959">
    <property type="entry name" value="ATPase_AAA_core"/>
</dbReference>
<dbReference type="InterPro" id="IPR027543">
    <property type="entry name" value="Lon_bac"/>
</dbReference>
<dbReference type="InterPro" id="IPR004815">
    <property type="entry name" value="Lon_bac/euk-typ"/>
</dbReference>
<dbReference type="InterPro" id="IPR054594">
    <property type="entry name" value="Lon_lid"/>
</dbReference>
<dbReference type="InterPro" id="IPR008269">
    <property type="entry name" value="Lon_proteolytic"/>
</dbReference>
<dbReference type="InterPro" id="IPR027065">
    <property type="entry name" value="Lon_Prtase"/>
</dbReference>
<dbReference type="InterPro" id="IPR003111">
    <property type="entry name" value="Lon_prtase_N"/>
</dbReference>
<dbReference type="InterPro" id="IPR046336">
    <property type="entry name" value="Lon_prtase_N_sf"/>
</dbReference>
<dbReference type="InterPro" id="IPR027417">
    <property type="entry name" value="P-loop_NTPase"/>
</dbReference>
<dbReference type="InterPro" id="IPR008268">
    <property type="entry name" value="Peptidase_S16_AS"/>
</dbReference>
<dbReference type="InterPro" id="IPR015947">
    <property type="entry name" value="PUA-like_sf"/>
</dbReference>
<dbReference type="InterPro" id="IPR020568">
    <property type="entry name" value="Ribosomal_Su5_D2-typ_SF"/>
</dbReference>
<dbReference type="InterPro" id="IPR014721">
    <property type="entry name" value="Ribsml_uS5_D2-typ_fold_subgr"/>
</dbReference>
<dbReference type="NCBIfam" id="TIGR00763">
    <property type="entry name" value="lon"/>
    <property type="match status" value="1"/>
</dbReference>
<dbReference type="NCBIfam" id="NF008053">
    <property type="entry name" value="PRK10787.1"/>
    <property type="match status" value="1"/>
</dbReference>
<dbReference type="PANTHER" id="PTHR10046">
    <property type="entry name" value="ATP DEPENDENT LON PROTEASE FAMILY MEMBER"/>
    <property type="match status" value="1"/>
</dbReference>
<dbReference type="Pfam" id="PF00004">
    <property type="entry name" value="AAA"/>
    <property type="match status" value="1"/>
</dbReference>
<dbReference type="Pfam" id="PF05362">
    <property type="entry name" value="Lon_C"/>
    <property type="match status" value="1"/>
</dbReference>
<dbReference type="Pfam" id="PF22667">
    <property type="entry name" value="Lon_lid"/>
    <property type="match status" value="1"/>
</dbReference>
<dbReference type="Pfam" id="PF02190">
    <property type="entry name" value="LON_substr_bdg"/>
    <property type="match status" value="1"/>
</dbReference>
<dbReference type="PIRSF" id="PIRSF001174">
    <property type="entry name" value="Lon_proteas"/>
    <property type="match status" value="1"/>
</dbReference>
<dbReference type="PRINTS" id="PR00830">
    <property type="entry name" value="ENDOLAPTASE"/>
</dbReference>
<dbReference type="SMART" id="SM00382">
    <property type="entry name" value="AAA"/>
    <property type="match status" value="1"/>
</dbReference>
<dbReference type="SMART" id="SM00464">
    <property type="entry name" value="LON"/>
    <property type="match status" value="1"/>
</dbReference>
<dbReference type="SUPFAM" id="SSF52540">
    <property type="entry name" value="P-loop containing nucleoside triphosphate hydrolases"/>
    <property type="match status" value="1"/>
</dbReference>
<dbReference type="SUPFAM" id="SSF88697">
    <property type="entry name" value="PUA domain-like"/>
    <property type="match status" value="1"/>
</dbReference>
<dbReference type="SUPFAM" id="SSF54211">
    <property type="entry name" value="Ribosomal protein S5 domain 2-like"/>
    <property type="match status" value="1"/>
</dbReference>
<dbReference type="PROSITE" id="PS51787">
    <property type="entry name" value="LON_N"/>
    <property type="match status" value="1"/>
</dbReference>
<dbReference type="PROSITE" id="PS51786">
    <property type="entry name" value="LON_PROTEOLYTIC"/>
    <property type="match status" value="1"/>
</dbReference>
<dbReference type="PROSITE" id="PS01046">
    <property type="entry name" value="LON_SER"/>
    <property type="match status" value="1"/>
</dbReference>
<feature type="initiator methionine" description="Removed" evidence="17">
    <location>
        <position position="1"/>
    </location>
</feature>
<feature type="chain" id="PRO_0000076133" description="Lon protease">
    <location>
        <begin position="2"/>
        <end position="784"/>
    </location>
</feature>
<feature type="domain" description="Lon N-terminal" evidence="3">
    <location>
        <begin position="11"/>
        <end position="204"/>
    </location>
</feature>
<feature type="domain" description="Lon proteolytic" evidence="2">
    <location>
        <begin position="592"/>
        <end position="773"/>
    </location>
</feature>
<feature type="active site">
    <location>
        <position position="679"/>
    </location>
</feature>
<feature type="active site" evidence="1 5">
    <location>
        <position position="722"/>
    </location>
</feature>
<feature type="binding site" evidence="1">
    <location>
        <begin position="356"/>
        <end position="363"/>
    </location>
    <ligand>
        <name>ATP</name>
        <dbReference type="ChEBI" id="CHEBI:30616"/>
    </ligand>
</feature>
<feature type="mutagenesis site" description="Loss of proteolytic activity and ATP-binding. No increased persister cell formation." evidence="14">
    <original>K</original>
    <variation>A</variation>
    <location>
        <position position="362"/>
    </location>
</feature>
<feature type="mutagenesis site" description="Loss of proteolytic activity." evidence="18">
    <original>H</original>
    <variation>Y</variation>
    <location>
        <position position="665"/>
    </location>
</feature>
<feature type="mutagenesis site" description="Loss of proteolytic activity." evidence="18">
    <original>H</original>
    <variation>Y</variation>
    <location>
        <position position="667"/>
    </location>
</feature>
<feature type="mutagenesis site" description="Loss of proteolytic activity." evidence="18">
    <original>D</original>
    <variation>N</variation>
    <location>
        <position position="676"/>
    </location>
</feature>
<feature type="mutagenesis site" description="Loss of proteolytic activity. No increased persister cell formation." evidence="16">
    <original>S</original>
    <variation>A</variation>
    <location>
        <position position="679"/>
    </location>
</feature>
<feature type="mutagenesis site" description="No effect." evidence="18">
    <original>D</original>
    <variation>N</variation>
    <location>
        <position position="743"/>
    </location>
</feature>
<feature type="sequence conflict" description="In Ref. 5; AAA24078." evidence="19" ref="5">
    <original>PKEAKEKAEAELQKLKMMSPMSAEATVVRGYIDWMVQVPWNARSKVKKDLRQAQ</original>
    <variation>RKRQKRKRTGVAEAENDVSDVGRSDRSAWLYRLDGTGAVECAYEGQKRPASGA</variation>
    <location>
        <begin position="264"/>
        <end position="317"/>
    </location>
</feature>
<feature type="sequence conflict" description="In Ref. 4; AAA16837." evidence="19" ref="4">
    <original>A</original>
    <variation>R</variation>
    <location>
        <position position="273"/>
    </location>
</feature>
<feature type="sequence conflict" description="In Ref. 4; AAA16837." evidence="19" ref="4">
    <original>S</original>
    <variation>T</variation>
    <location>
        <position position="307"/>
    </location>
</feature>
<feature type="sequence conflict" description="In Ref. 5; AAA24078." evidence="19" ref="5">
    <original>AGVRGLEREISKLCRKAVKQLLLDK</original>
    <variation>RACVVWSVKSPNCVAKRLSSYCSIT</variation>
    <location>
        <begin position="539"/>
        <end position="563"/>
    </location>
</feature>
<feature type="sequence conflict" description="In Ref. 4; AAA16837." evidence="19" ref="4">
    <original>Q</original>
    <variation>R</variation>
    <location>
        <position position="772"/>
    </location>
</feature>
<feature type="sequence conflict" description="In Ref. 2; AAA24079." evidence="19" ref="2">
    <original>QVVTAK</original>
    <variation>HHSLRRRCSTASTYYWAKS</variation>
    <location>
        <begin position="779"/>
        <end position="784"/>
    </location>
</feature>
<feature type="strand" evidence="22">
    <location>
        <begin position="9"/>
        <end position="18"/>
    </location>
</feature>
<feature type="strand" evidence="22">
    <location>
        <begin position="26"/>
        <end position="31"/>
    </location>
</feature>
<feature type="helix" evidence="22">
    <location>
        <begin position="34"/>
        <end position="44"/>
    </location>
</feature>
<feature type="turn" evidence="22">
    <location>
        <begin position="45"/>
        <end position="47"/>
    </location>
</feature>
<feature type="strand" evidence="22">
    <location>
        <begin position="48"/>
        <end position="55"/>
    </location>
</feature>
<feature type="helix" evidence="22">
    <location>
        <begin position="65"/>
        <end position="67"/>
    </location>
</feature>
<feature type="strand" evidence="22">
    <location>
        <begin position="70"/>
        <end position="82"/>
    </location>
</feature>
<feature type="strand" evidence="22">
    <location>
        <begin position="88"/>
        <end position="105"/>
    </location>
</feature>
<feature type="strand" evidence="22">
    <location>
        <begin position="107"/>
        <end position="116"/>
    </location>
</feature>
<feature type="helix" evidence="23">
    <location>
        <begin position="124"/>
        <end position="145"/>
    </location>
</feature>
<feature type="helix" evidence="23">
    <location>
        <begin position="150"/>
        <end position="155"/>
    </location>
</feature>
<feature type="helix" evidence="23">
    <location>
        <begin position="162"/>
        <end position="171"/>
    </location>
</feature>
<feature type="helix" evidence="23">
    <location>
        <begin position="177"/>
        <end position="185"/>
    </location>
</feature>
<feature type="helix" evidence="23">
    <location>
        <begin position="189"/>
        <end position="242"/>
    </location>
</feature>
<feature type="turn" evidence="24">
    <location>
        <begin position="250"/>
        <end position="259"/>
    </location>
</feature>
<feature type="helix" evidence="24">
    <location>
        <begin position="268"/>
        <end position="276"/>
    </location>
</feature>
<feature type="helix" evidence="24">
    <location>
        <begin position="287"/>
        <end position="299"/>
    </location>
</feature>
<feature type="helix" evidence="24">
    <location>
        <begin position="314"/>
        <end position="320"/>
    </location>
</feature>
<feature type="turn" evidence="24">
    <location>
        <begin position="321"/>
        <end position="324"/>
    </location>
</feature>
<feature type="turn" evidence="24">
    <location>
        <begin position="327"/>
        <end position="330"/>
    </location>
</feature>
<feature type="helix" evidence="24">
    <location>
        <begin position="331"/>
        <end position="340"/>
    </location>
</feature>
<feature type="strand" evidence="24">
    <location>
        <begin position="343"/>
        <end position="345"/>
    </location>
</feature>
<feature type="strand" evidence="24">
    <location>
        <begin position="353"/>
        <end position="355"/>
    </location>
</feature>
<feature type="strand" evidence="24">
    <location>
        <begin position="360"/>
        <end position="362"/>
    </location>
</feature>
<feature type="helix" evidence="24">
    <location>
        <begin position="363"/>
        <end position="372"/>
    </location>
</feature>
<feature type="strand" evidence="24">
    <location>
        <begin position="376"/>
        <end position="381"/>
    </location>
</feature>
<feature type="turn" evidence="24">
    <location>
        <begin position="389"/>
        <end position="391"/>
    </location>
</feature>
<feature type="helix" evidence="24">
    <location>
        <begin position="405"/>
        <end position="412"/>
    </location>
</feature>
<feature type="strand" evidence="24">
    <location>
        <begin position="415"/>
        <end position="423"/>
    </location>
</feature>
<feature type="strand" evidence="24">
    <location>
        <begin position="431"/>
        <end position="434"/>
    </location>
</feature>
<feature type="helix" evidence="24">
    <location>
        <begin position="436"/>
        <end position="444"/>
    </location>
</feature>
<feature type="turn" evidence="24">
    <location>
        <begin position="446"/>
        <end position="448"/>
    </location>
</feature>
<feature type="helix" evidence="25">
    <location>
        <begin position="449"/>
        <end position="451"/>
    </location>
</feature>
<feature type="strand" evidence="24">
    <location>
        <begin position="455"/>
        <end position="457"/>
    </location>
</feature>
<feature type="strand" evidence="24">
    <location>
        <begin position="459"/>
        <end position="461"/>
    </location>
</feature>
<feature type="strand" evidence="24">
    <location>
        <begin position="467"/>
        <end position="471"/>
    </location>
</feature>
<feature type="strand" evidence="24">
    <location>
        <begin position="473"/>
        <end position="475"/>
    </location>
</feature>
<feature type="helix" evidence="24">
    <location>
        <begin position="479"/>
        <end position="482"/>
    </location>
</feature>
<feature type="strand" evidence="24">
    <location>
        <begin position="487"/>
        <end position="489"/>
    </location>
</feature>
<feature type="helix" evidence="20">
    <location>
        <begin position="495"/>
        <end position="504"/>
    </location>
</feature>
<feature type="helix" evidence="20">
    <location>
        <begin position="506"/>
        <end position="513"/>
    </location>
</feature>
<feature type="turn" evidence="20">
    <location>
        <begin position="518"/>
        <end position="520"/>
    </location>
</feature>
<feature type="strand" evidence="20">
    <location>
        <begin position="521"/>
        <end position="523"/>
    </location>
</feature>
<feature type="helix" evidence="20">
    <location>
        <begin position="525"/>
        <end position="535"/>
    </location>
</feature>
<feature type="strand" evidence="20">
    <location>
        <begin position="539"/>
        <end position="541"/>
    </location>
</feature>
<feature type="helix" evidence="20">
    <location>
        <begin position="542"/>
        <end position="560"/>
    </location>
</feature>
<feature type="strand" evidence="20">
    <location>
        <begin position="568"/>
        <end position="570"/>
    </location>
</feature>
<feature type="turn" evidence="20">
    <location>
        <begin position="572"/>
        <end position="574"/>
    </location>
</feature>
<feature type="helix" evidence="20">
    <location>
        <begin position="575"/>
        <end position="579"/>
    </location>
</feature>
<feature type="strand" evidence="21">
    <location>
        <begin position="596"/>
        <end position="604"/>
    </location>
</feature>
<feature type="strand" evidence="21">
    <location>
        <begin position="607"/>
        <end position="619"/>
    </location>
</feature>
<feature type="strand" evidence="21">
    <location>
        <begin position="624"/>
        <end position="630"/>
    </location>
</feature>
<feature type="helix" evidence="21">
    <location>
        <begin position="632"/>
        <end position="647"/>
    </location>
</feature>
<feature type="helix" evidence="21">
    <location>
        <begin position="649"/>
        <end position="652"/>
    </location>
</feature>
<feature type="turn" evidence="21">
    <location>
        <begin position="656"/>
        <end position="660"/>
    </location>
</feature>
<feature type="strand" evidence="21">
    <location>
        <begin position="661"/>
        <end position="667"/>
    </location>
</feature>
<feature type="turn" evidence="25">
    <location>
        <begin position="669"/>
        <end position="672"/>
    </location>
</feature>
<feature type="strand" evidence="21">
    <location>
        <begin position="675"/>
        <end position="678"/>
    </location>
</feature>
<feature type="helix" evidence="21">
    <location>
        <begin position="681"/>
        <end position="693"/>
    </location>
</feature>
<feature type="strand" evidence="21">
    <location>
        <begin position="701"/>
        <end position="703"/>
    </location>
</feature>
<feature type="strand" evidence="25">
    <location>
        <begin position="705"/>
        <end position="707"/>
    </location>
</feature>
<feature type="strand" evidence="21">
    <location>
        <begin position="712"/>
        <end position="714"/>
    </location>
</feature>
<feature type="helix" evidence="21">
    <location>
        <begin position="719"/>
        <end position="728"/>
    </location>
</feature>
<feature type="strand" evidence="21">
    <location>
        <begin position="733"/>
        <end position="737"/>
    </location>
</feature>
<feature type="helix" evidence="21">
    <location>
        <begin position="738"/>
        <end position="746"/>
    </location>
</feature>
<feature type="helix" evidence="21">
    <location>
        <begin position="749"/>
        <end position="754"/>
    </location>
</feature>
<feature type="strand" evidence="21">
    <location>
        <begin position="755"/>
        <end position="762"/>
    </location>
</feature>
<feature type="helix" evidence="21">
    <location>
        <begin position="763"/>
        <end position="770"/>
    </location>
</feature>
<feature type="strand" evidence="21">
    <location>
        <begin position="771"/>
        <end position="773"/>
    </location>
</feature>
<accession>P0A9M0</accession>
<accession>P08177</accession>
<accession>P78219</accession>
<accession>Q2MBY7</accession>
<reference key="1">
    <citation type="journal article" date="1993" name="Gene">
        <title>Controlled high-level expression of the lon gene of Escherichia coli allows overproduction of Lon protease.</title>
        <authorList>
            <person name="Thomas C.D."/>
            <person name="Modha J."/>
            <person name="Razzaq T.M."/>
            <person name="Cullis P.M."/>
            <person name="Rivett A."/>
        </authorList>
    </citation>
    <scope>NUCLEOTIDE SEQUENCE [GENOMIC DNA]</scope>
    <scope>PARTIAL PROTEIN SEQUENCE</scope>
</reference>
<reference key="2">
    <citation type="journal article" date="1988" name="Bioorg. Khim.">
        <title>Cloning, expression and structure of the functionally active shortened lon gene in Escherichia coli.</title>
        <authorList>
            <person name="Amerik A.Y."/>
            <person name="Chistyakova L.G."/>
            <person name="Ostroumova N.I."/>
            <person name="Gurevich A.I."/>
            <person name="Antonov V.K."/>
        </authorList>
    </citation>
    <scope>NUCLEOTIDE SEQUENCE [GENOMIC DNA]</scope>
</reference>
<reference key="3">
    <citation type="journal article" date="1990" name="Bioorg. Khim.">
        <title>Cloning, structure and expression of the full-size lon gene in Escherichia coli coding for ATP-dependent La-proteinase.</title>
        <authorList>
            <person name="Amerik A.I.U."/>
            <person name="Antonov V.K."/>
            <person name="Ostroumova N.I."/>
            <person name="Rotanova T.V."/>
            <person name="Chistiakova L.G."/>
        </authorList>
    </citation>
    <scope>NUCLEOTIDE SEQUENCE [GENOMIC DNA]</scope>
    <source>
        <strain>K12</strain>
    </source>
</reference>
<reference key="4">
    <citation type="journal article" date="1993" name="J. Biol. Chem.">
        <title>ATP hydrolysis is not stoichiometrically linked with proteolysis in the ATP-dependent protease La from Escherichia coli.</title>
        <authorList>
            <person name="Fischer H."/>
            <person name="Glockshuber R."/>
        </authorList>
    </citation>
    <scope>NUCLEOTIDE SEQUENCE [GENOMIC DNA]</scope>
    <scope>MUTAGENESIS OF SER-679</scope>
    <source>
        <strain>K12 / W3110 / ATCC 27325 / DSM 5911</strain>
    </source>
</reference>
<reference key="5">
    <citation type="journal article" date="1988" name="J. Biol. Chem.">
        <title>Sequence of the lon gene in Escherichia coli. A heat-shock gene which encodes the ATP-dependent protease La.</title>
        <authorList>
            <person name="Chin D.T."/>
            <person name="Goff S.A."/>
            <person name="Webster T."/>
            <person name="Smith T."/>
            <person name="Goldberg A.L."/>
        </authorList>
    </citation>
    <scope>NUCLEOTIDE SEQUENCE [GENOMIC DNA]</scope>
    <scope>PROTEIN SEQUENCE OF 783-783</scope>
</reference>
<reference key="6">
    <citation type="submission" date="1997-01" db="EMBL/GenBank/DDBJ databases">
        <title>Sequence of minutes 4-25 of Escherichia coli.</title>
        <authorList>
            <person name="Chung E."/>
            <person name="Allen E."/>
            <person name="Araujo R."/>
            <person name="Aparicio A.M."/>
            <person name="Davis K."/>
            <person name="Duncan M."/>
            <person name="Federspiel N."/>
            <person name="Hyman R."/>
            <person name="Kalman S."/>
            <person name="Komp C."/>
            <person name="Kurdi O."/>
            <person name="Lew H."/>
            <person name="Lin D."/>
            <person name="Namath A."/>
            <person name="Oefner P."/>
            <person name="Roberts D."/>
            <person name="Schramm S."/>
            <person name="Davis R.W."/>
        </authorList>
    </citation>
    <scope>NUCLEOTIDE SEQUENCE [LARGE SCALE GENOMIC DNA]</scope>
    <source>
        <strain>K12 / MG1655 / ATCC 47076</strain>
    </source>
</reference>
<reference key="7">
    <citation type="journal article" date="1997" name="Science">
        <title>The complete genome sequence of Escherichia coli K-12.</title>
        <authorList>
            <person name="Blattner F.R."/>
            <person name="Plunkett G. III"/>
            <person name="Bloch C.A."/>
            <person name="Perna N.T."/>
            <person name="Burland V."/>
            <person name="Riley M."/>
            <person name="Collado-Vides J."/>
            <person name="Glasner J.D."/>
            <person name="Rode C.K."/>
            <person name="Mayhew G.F."/>
            <person name="Gregor J."/>
            <person name="Davis N.W."/>
            <person name="Kirkpatrick H.A."/>
            <person name="Goeden M.A."/>
            <person name="Rose D.J."/>
            <person name="Mau B."/>
            <person name="Shao Y."/>
        </authorList>
    </citation>
    <scope>NUCLEOTIDE SEQUENCE [LARGE SCALE GENOMIC DNA]</scope>
    <source>
        <strain>K12 / MG1655 / ATCC 47076</strain>
    </source>
</reference>
<reference key="8">
    <citation type="journal article" date="2006" name="Mol. Syst. Biol.">
        <title>Highly accurate genome sequences of Escherichia coli K-12 strains MG1655 and W3110.</title>
        <authorList>
            <person name="Hayashi K."/>
            <person name="Morooka N."/>
            <person name="Yamamoto Y."/>
            <person name="Fujita K."/>
            <person name="Isono K."/>
            <person name="Choi S."/>
            <person name="Ohtsubo E."/>
            <person name="Baba T."/>
            <person name="Wanner B.L."/>
            <person name="Mori H."/>
            <person name="Horiuchi T."/>
        </authorList>
    </citation>
    <scope>NUCLEOTIDE SEQUENCE [LARGE SCALE GENOMIC DNA]</scope>
    <source>
        <strain>K12 / W3110 / ATCC 27325 / DSM 5911</strain>
    </source>
</reference>
<reference key="9">
    <citation type="journal article" date="1985" name="J. Bacteriol.">
        <title>Regulatory region of the heat shock-inducible capR (lon) gene: DNA and protein sequences.</title>
        <authorList>
            <person name="Gayda R.C."/>
            <person name="Stephens P.E."/>
            <person name="Hewick R."/>
            <person name="Schoemaker J.M."/>
            <person name="Dreyer W.J."/>
            <person name="Markovitz A."/>
        </authorList>
    </citation>
    <scope>NUCLEOTIDE SEQUENCE [GENOMIC DNA] OF 1-58</scope>
    <scope>PROTEIN SEQUENCE OF 1-14</scope>
</reference>
<reference key="10">
    <citation type="journal article" date="1997" name="J. Biol. Chem.">
        <title>Bacterial protease Lon is a site-specific DNA-binding protein.</title>
        <authorList>
            <person name="Fu G.K."/>
            <person name="Smith M.J."/>
            <person name="Markovitz D.M."/>
        </authorList>
    </citation>
    <scope>PROTEIN SEQUENCE OF 2-9</scope>
    <scope>DNA-BINDING</scope>
    <source>
        <strain>ATCC 37196 / Y1089</strain>
    </source>
</reference>
<reference key="11">
    <citation type="journal article" date="1994" name="FEBS Lett.">
        <title>A point mutation within the ATP-binding site inactivates both catalytic functions of the ATP-dependent protease La (Lon) from Escherichia coli.</title>
        <authorList>
            <person name="Fischer H."/>
            <person name="Glockshuber R."/>
        </authorList>
    </citation>
    <scope>MUTAGENESIS OF LYS-362</scope>
</reference>
<reference key="12">
    <citation type="journal article" date="1994" name="Mol. Microbiol.">
        <title>Lon-dependent proteolysis of CcdA is the key control for activation of CcdB in plasmid-free segregant bacteria.</title>
        <authorList>
            <person name="Van Melderen L."/>
            <person name="Bernard P."/>
            <person name="Couturier M."/>
        </authorList>
    </citation>
    <scope>CLEAVAGE OF CCDA ANTITOXIN</scope>
    <source>
        <strain>K12</strain>
    </source>
</reference>
<reference key="13">
    <citation type="journal article" date="1997" name="Electrophoresis">
        <title>Escherichia coli proteome analysis using the gene-protein database.</title>
        <authorList>
            <person name="VanBogelen R.A."/>
            <person name="Abshire K.Z."/>
            <person name="Moldover B."/>
            <person name="Olson E.R."/>
            <person name="Neidhardt F.C."/>
        </authorList>
    </citation>
    <scope>IDENTIFICATION BY 2D-GEL</scope>
</reference>
<reference key="14">
    <citation type="journal article" date="1998" name="FEBS Lett.">
        <title>Mutations in the proteolytic domain of Escherichia coli protease Lon impair the ATPase activity of the enzyme.</title>
        <authorList>
            <person name="Starkova N.N."/>
            <person name="Koroleva E.P."/>
            <person name="Rumsh L.D."/>
            <person name="Ginodman L.M."/>
            <person name="Rotanova T.V."/>
        </authorList>
    </citation>
    <scope>MUTAGENESIS OF HIS-665; HIS-667; ASP-676 AND ASP-743</scope>
</reference>
<reference key="15">
    <citation type="journal article" date="1998" name="Genes Dev.">
        <title>Lon-mediated proteolysis of the Escherichia coli UmuD mutagenesis protein: in vitro degradation and identification of residues required for proteolysis.</title>
        <authorList>
            <person name="Gonzalez M."/>
            <person name="Frank E.G."/>
            <person name="Levine A.S."/>
            <person name="Woodgate R."/>
        </authorList>
    </citation>
    <scope>CLEAVAGE OF UMUD</scope>
</reference>
<reference key="16">
    <citation type="journal article" date="1999" name="J. Bacteriol.">
        <title>A conserved domain in Escherichia coli Lon protease is involved in substrate discriminator activity.</title>
        <authorList>
            <person name="Ebel W."/>
            <person name="Skinner M.M."/>
            <person name="Dierksen K.P."/>
            <person name="Scott J.M."/>
            <person name="Trempy J.E."/>
        </authorList>
    </citation>
    <scope>MUTAGENESIS</scope>
</reference>
<reference key="17">
    <citation type="journal article" date="2002" name="Biochemistry">
        <title>Kinetic characterization of the peptidase activity of Escherichia coli Lon reveals the mechanistic similarities in ATP-dependent hydrolysis of peptide and protein substrates.</title>
        <authorList>
            <person name="Thomas-Wohlever J."/>
            <person name="Lee I."/>
        </authorList>
    </citation>
    <scope>FUNCTION</scope>
</reference>
<reference key="18">
    <citation type="journal article" date="2004" name="Eur. J. Biochem.">
        <title>The Thermoplasma acidophilum Lon protease has a Ser-Lys dyad active site.</title>
        <authorList>
            <person name="Besche H."/>
            <person name="Zwickl P."/>
        </authorList>
    </citation>
    <scope>BIOPHYSICOCHEMICAL PROPERTIES</scope>
</reference>
<reference key="19">
    <citation type="journal article" date="2004" name="Mol. Microbiol.">
        <title>Overproduction of the Lon protease triggers inhibition of translation in Escherichia coli: involvement of the yefM-yoeB toxin-antitoxin system.</title>
        <authorList>
            <person name="Christensen S.K."/>
            <person name="Maenhaut-Michel G."/>
            <person name="Mine N."/>
            <person name="Gottesman S."/>
            <person name="Gerdes K."/>
            <person name="Van Melderen L."/>
        </authorList>
    </citation>
    <scope>INTERACTION WITH THE YOEB-YEFM TOXIN-ANTITOXIN SYSTEM</scope>
    <source>
        <strain>K12 / MG1655 / ATCC 47076</strain>
    </source>
</reference>
<reference key="20">
    <citation type="journal article" date="2006" name="Biochemistry">
        <title>Single-turnover kinetic experiments confirm the existence of high- and low-affinity ATPase sites in Escherichia coli Lon protease.</title>
        <authorList>
            <person name="Vineyard D."/>
            <person name="Patterson-Ward J."/>
            <person name="Lee I."/>
        </authorList>
    </citation>
    <scope>FUNCTION</scope>
</reference>
<reference key="21">
    <citation type="journal article" date="2006" name="J. Mol. Biol.">
        <title>Sequence requirements for Lon-dependent degradation of the Escherichia coli transcription activator SoxS: identification of the SoxS residues critical to proteolysis and specific inhibition of in vitro degradation by a peptide comprised of the N-terminal 21 amino acid residues.</title>
        <authorList>
            <person name="Shah I.M."/>
            <person name="Wolf R.E. Jr."/>
        </authorList>
    </citation>
    <scope>CLEAVAGE OF SOXS</scope>
</reference>
<reference key="22">
    <citation type="journal article" date="2006" name="Mol. Cells">
        <title>Oligomeric structure of the ATP-dependent protease La (Lon) of Escherichia coli.</title>
        <authorList>
            <person name="Park S.C."/>
            <person name="Jia B."/>
            <person name="Yang J.K."/>
            <person name="Van D.L."/>
            <person name="Shao Y.G."/>
            <person name="Han S.W."/>
            <person name="Jeon Y.J."/>
            <person name="Chung C.H."/>
            <person name="Cheong G.W."/>
        </authorList>
    </citation>
    <scope>SUBUNIT</scope>
</reference>
<reference key="23">
    <citation type="journal article" date="2009" name="Antimicrob. Agents Chemother.">
        <title>Combined inactivation of lon and ycgE decreases multidrug susceptibility by reducing the amount of OmpF porin in Escherichia coli.</title>
        <authorList>
            <person name="Duval V."/>
            <person name="Nicoloff H."/>
            <person name="Levy S.B."/>
        </authorList>
    </citation>
    <scope>ROLE IN REGULATION OF OMPF IN ASSOCIATION WITH YCGE</scope>
    <scope>DISRUPTION PHENOTYPE</scope>
    <source>
        <strain>K12 / AG100</strain>
    </source>
</reference>
<reference key="24">
    <citation type="journal article" date="2011" name="Proc. Natl. Acad. Sci. U.S.A.">
        <title>Bacterial persistence by RNA endonucleases.</title>
        <authorList>
            <person name="Maisonneuve E."/>
            <person name="Shakespeare L.J."/>
            <person name="Joergensen M.G."/>
            <person name="Gerdes K."/>
        </authorList>
    </citation>
    <scope>RETRACTED PAPER</scope>
    <source>
        <strain>K12 / MG1655 / ATCC 47076</strain>
    </source>
</reference>
<reference key="25">
    <citation type="journal article" date="2018" name="Proc. Natl. Acad. Sci. U.S.A.">
        <authorList>
            <person name="Maisonneuve E."/>
            <person name="Shakespeare L.J."/>
            <person name="Joergensen M.G."/>
            <person name="Gerdes K."/>
        </authorList>
    </citation>
    <scope>RETRACTION NOTICE OF PUBMED:21788497</scope>
</reference>
<reference key="26">
    <citation type="journal article" date="2012" name="PLoS ONE">
        <title>Regulation of the Escherichia coli HipBA toxin-antitoxin system by proteolysis.</title>
        <authorList>
            <person name="Hansen S."/>
            <person name="Vulic M."/>
            <person name="Min J."/>
            <person name="Yen T.J."/>
            <person name="Schumacher M.A."/>
            <person name="Brennan R.G."/>
            <person name="Lewis K."/>
        </authorList>
    </citation>
    <scope>CLEAVAGE OF HIPB ANTITOXIN</scope>
</reference>
<reference key="27">
    <citation type="journal article" date="2014" name="J. Biol. Chem.">
        <title>MazF-induced growth inhibition and persister generation in Escherichia coli.</title>
        <authorList>
            <person name="Tripathi A."/>
            <person name="Dewan P.C."/>
            <person name="Siddique S.A."/>
            <person name="Varadarajan R."/>
        </authorList>
    </citation>
    <scope>CLEAVAGE OF ANTITOXIN MAZE</scope>
    <scope>DISRUPTION PHENOTYPE</scope>
    <source>
        <strain>K12 / BW25113</strain>
        <strain>K12 / MC4100 / ATCC 35695 / DSM 6574</strain>
    </source>
</reference>
<reference key="28">
    <citation type="journal article" date="2004" name="J. Biol. Chem.">
        <title>The catalytic domain of Escherichia coli Lon protease has a unique fold and a Ser-Lys dyad in the active site.</title>
        <authorList>
            <person name="Botos I."/>
            <person name="Melnikov E.E."/>
            <person name="Cherry S."/>
            <person name="Tropea J.E."/>
            <person name="Khalatova A.G."/>
            <person name="Rasulova F."/>
            <person name="Dauter Z."/>
            <person name="Maurizi M.R."/>
            <person name="Rotanova T.V."/>
            <person name="Wlodawer A."/>
            <person name="Gustchina A."/>
        </authorList>
    </citation>
    <scope>X-RAY CRYSTALLOGRAPHY (1.75 ANGSTROMS) OF 585-784</scope>
    <scope>ACTIVE SITE LYS-722</scope>
</reference>
<reference key="29">
    <citation type="journal article" date="2004" name="J. Struct. Biol.">
        <title>Crystal structure of the AAA+ alpha domain of E. coli Lon protease at 1.9A resolution.</title>
        <authorList>
            <person name="Botos I."/>
            <person name="Melnikov E.E."/>
            <person name="Cherry S."/>
            <person name="Khalatova A.G."/>
            <person name="Rasulova F.S."/>
            <person name="Tropea J.E."/>
            <person name="Maurizi M.R."/>
            <person name="Rotanova T.V."/>
            <person name="Gustchina A."/>
            <person name="Wlodawer A."/>
        </authorList>
    </citation>
    <scope>X-RAY CRYSTALLOGRAPHY (1.90 ANGSTROMS) OF 491-584</scope>
</reference>
<reference key="30">
    <citation type="journal article" date="2005" name="Protein Sci.">
        <title>Crystal structure of the N-terminal domain of E. coli Lon protease.</title>
        <authorList>
            <person name="Li M."/>
            <person name="Rasulova F."/>
            <person name="Melnikov E.E."/>
            <person name="Rotanova T.V."/>
            <person name="Gustchina A."/>
            <person name="Maurizi M.R."/>
            <person name="Wlodawer A."/>
        </authorList>
    </citation>
    <scope>X-RAY CRYSTALLOGRAPHY (2.03 ANGSTROMS) OF 1-118</scope>
</reference>